<keyword id="KW-0614">Plasmid</keyword>
<reference key="1">
    <citation type="submission" date="1995-05" db="EMBL/GenBank/DDBJ databases">
        <title>Comparison and high conservation of nucleotide sequences of spa-mxi regions between S.sonnei and S.flexneri -- identification of a new gene coding plausible membrane protein.</title>
        <authorList>
            <person name="Arakawa E."/>
            <person name="Kato J."/>
            <person name="Ito K."/>
            <person name="Watanabe H."/>
        </authorList>
    </citation>
    <scope>NUCLEOTIDE SEQUENCE [GENOMIC DNA]</scope>
    <source>
        <strain>HW383</strain>
    </source>
</reference>
<feature type="chain" id="PRO_0000066509" description="Uncharacterized 9.1 kDa protein in spaS 3'region">
    <location>
        <begin position="1"/>
        <end position="80"/>
    </location>
</feature>
<sequence>MCYMGVNFCNKIGIDQSEFEIESSIINSIANEVLNPISFLSNKDIINVLLRKISSECDLVRKDIYRCALELVVEKTPDDL</sequence>
<accession>P0A244</accession>
<accession>Q55298</accession>
<protein>
    <recommendedName>
        <fullName>Uncharacterized 9.1 kDa protein in spaS 3'region</fullName>
    </recommendedName>
    <alternativeName>
        <fullName>SPA-ORF10</fullName>
        <shortName>ORF-10</shortName>
    </alternativeName>
</protein>
<organism>
    <name type="scientific">Shigella sonnei</name>
    <dbReference type="NCBI Taxonomy" id="624"/>
    <lineage>
        <taxon>Bacteria</taxon>
        <taxon>Pseudomonadati</taxon>
        <taxon>Pseudomonadota</taxon>
        <taxon>Gammaproteobacteria</taxon>
        <taxon>Enterobacterales</taxon>
        <taxon>Enterobacteriaceae</taxon>
        <taxon>Shigella</taxon>
    </lineage>
</organism>
<dbReference type="EMBL" id="D50601">
    <property type="protein sequence ID" value="BAA09166.1"/>
    <property type="molecule type" value="Genomic_DNA"/>
</dbReference>
<dbReference type="SMR" id="P0A244"/>
<dbReference type="STRING" id="216599.GCA_000283715_05248"/>
<dbReference type="GO" id="GO:0071468">
    <property type="term" value="P:cellular response to acidic pH"/>
    <property type="evidence" value="ECO:0007669"/>
    <property type="project" value="InterPro"/>
</dbReference>
<dbReference type="Gene3D" id="1.20.5.5260">
    <property type="match status" value="1"/>
</dbReference>
<dbReference type="InterPro" id="IPR024753">
    <property type="entry name" value="AriR"/>
</dbReference>
<dbReference type="Pfam" id="PF10798">
    <property type="entry name" value="YmgB"/>
    <property type="match status" value="1"/>
</dbReference>
<geneLocation type="plasmid">
    <name>pINV</name>
</geneLocation>
<proteinExistence type="predicted"/>
<name>YSPT_SHISO</name>